<name>NLPD_BUCAI</name>
<accession>P57493</accession>
<feature type="chain" id="PRO_0000096161" description="Protein NlpD/LppB homolog">
    <location>
        <begin position="1"/>
        <end position="334"/>
    </location>
</feature>
<feature type="domain" description="LysM" evidence="1">
    <location>
        <begin position="89"/>
        <end position="133"/>
    </location>
</feature>
<proteinExistence type="inferred from homology"/>
<organism>
    <name type="scientific">Buchnera aphidicola subsp. Acyrthosiphon pisum (strain APS)</name>
    <name type="common">Acyrthosiphon pisum symbiotic bacterium</name>
    <dbReference type="NCBI Taxonomy" id="107806"/>
    <lineage>
        <taxon>Bacteria</taxon>
        <taxon>Pseudomonadati</taxon>
        <taxon>Pseudomonadota</taxon>
        <taxon>Gammaproteobacteria</taxon>
        <taxon>Enterobacterales</taxon>
        <taxon>Erwiniaceae</taxon>
        <taxon>Buchnera</taxon>
    </lineage>
</organism>
<dbReference type="EMBL" id="BA000003">
    <property type="protein sequence ID" value="BAB13116.1"/>
    <property type="molecule type" value="Genomic_DNA"/>
</dbReference>
<dbReference type="RefSeq" id="NP_240230.1">
    <property type="nucleotide sequence ID" value="NC_002528.1"/>
</dbReference>
<dbReference type="RefSeq" id="WP_009874371.1">
    <property type="nucleotide sequence ID" value="NC_002528.1"/>
</dbReference>
<dbReference type="SMR" id="P57493"/>
<dbReference type="STRING" id="563178.BUAP5A_411"/>
<dbReference type="EnsemblBacteria" id="BAB13116">
    <property type="protein sequence ID" value="BAB13116"/>
    <property type="gene ID" value="BAB13116"/>
</dbReference>
<dbReference type="KEGG" id="buc:BU418"/>
<dbReference type="PATRIC" id="fig|107806.10.peg.427"/>
<dbReference type="eggNOG" id="COG0739">
    <property type="taxonomic scope" value="Bacteria"/>
</dbReference>
<dbReference type="eggNOG" id="COG1388">
    <property type="taxonomic scope" value="Bacteria"/>
</dbReference>
<dbReference type="HOGENOM" id="CLU_029425_0_4_6"/>
<dbReference type="BioCyc" id="BAPH107806:GBZJ-411-MONOMER"/>
<dbReference type="Proteomes" id="UP000001806">
    <property type="component" value="Chromosome"/>
</dbReference>
<dbReference type="GO" id="GO:0032153">
    <property type="term" value="C:cell division site"/>
    <property type="evidence" value="ECO:0007669"/>
    <property type="project" value="TreeGrafter"/>
</dbReference>
<dbReference type="GO" id="GO:0009279">
    <property type="term" value="C:cell outer membrane"/>
    <property type="evidence" value="ECO:0007669"/>
    <property type="project" value="TreeGrafter"/>
</dbReference>
<dbReference type="GO" id="GO:0004222">
    <property type="term" value="F:metalloendopeptidase activity"/>
    <property type="evidence" value="ECO:0007669"/>
    <property type="project" value="TreeGrafter"/>
</dbReference>
<dbReference type="CDD" id="cd00118">
    <property type="entry name" value="LysM"/>
    <property type="match status" value="1"/>
</dbReference>
<dbReference type="CDD" id="cd12797">
    <property type="entry name" value="M23_peptidase"/>
    <property type="match status" value="1"/>
</dbReference>
<dbReference type="Gene3D" id="2.70.70.10">
    <property type="entry name" value="Glucose Permease (Domain IIA)"/>
    <property type="match status" value="1"/>
</dbReference>
<dbReference type="Gene3D" id="3.10.350.10">
    <property type="entry name" value="LysM domain"/>
    <property type="match status" value="1"/>
</dbReference>
<dbReference type="InterPro" id="IPR050570">
    <property type="entry name" value="Cell_wall_metabolism_enzyme"/>
</dbReference>
<dbReference type="InterPro" id="IPR011055">
    <property type="entry name" value="Dup_hybrid_motif"/>
</dbReference>
<dbReference type="InterPro" id="IPR018392">
    <property type="entry name" value="LysM_dom"/>
</dbReference>
<dbReference type="InterPro" id="IPR036779">
    <property type="entry name" value="LysM_dom_sf"/>
</dbReference>
<dbReference type="InterPro" id="IPR016047">
    <property type="entry name" value="Peptidase_M23"/>
</dbReference>
<dbReference type="PANTHER" id="PTHR21666:SF263">
    <property type="entry name" value="MUREIN HYDROLASE ACTIVATOR NLPD"/>
    <property type="match status" value="1"/>
</dbReference>
<dbReference type="PANTHER" id="PTHR21666">
    <property type="entry name" value="PEPTIDASE-RELATED"/>
    <property type="match status" value="1"/>
</dbReference>
<dbReference type="Pfam" id="PF01476">
    <property type="entry name" value="LysM"/>
    <property type="match status" value="1"/>
</dbReference>
<dbReference type="Pfam" id="PF01551">
    <property type="entry name" value="Peptidase_M23"/>
    <property type="match status" value="1"/>
</dbReference>
<dbReference type="SMART" id="SM00257">
    <property type="entry name" value="LysM"/>
    <property type="match status" value="1"/>
</dbReference>
<dbReference type="SUPFAM" id="SSF51261">
    <property type="entry name" value="Duplicated hybrid motif"/>
    <property type="match status" value="1"/>
</dbReference>
<dbReference type="PROSITE" id="PS51782">
    <property type="entry name" value="LYSM"/>
    <property type="match status" value="1"/>
</dbReference>
<evidence type="ECO:0000255" key="1">
    <source>
        <dbReference type="PROSITE-ProRule" id="PRU01118"/>
    </source>
</evidence>
<evidence type="ECO:0000305" key="2"/>
<keyword id="KW-1185">Reference proteome</keyword>
<reference key="1">
    <citation type="journal article" date="2000" name="Nature">
        <title>Genome sequence of the endocellular bacterial symbiont of aphids Buchnera sp. APS.</title>
        <authorList>
            <person name="Shigenobu S."/>
            <person name="Watanabe H."/>
            <person name="Hattori M."/>
            <person name="Sakaki Y."/>
            <person name="Ishikawa H."/>
        </authorList>
    </citation>
    <scope>NUCLEOTIDE SEQUENCE [LARGE SCALE GENOMIC DNA]</scope>
    <source>
        <strain>APS</strain>
    </source>
</reference>
<gene>
    <name type="ordered locus">BU418</name>
</gene>
<sequence>MQLKIFLFKLLFLIFFSFSFNNFAFGFFFNNRYDSNFFIDKKYTKDFIFFKKNECFSFLKYKKNFFLNKKIIIGNNHFIGFFQKNRFKIFYIVKSKDTMYSIAKNSGYNYHELSKFNSIKKPYKIIIGQKIWMGDFLIDKNNNDCSILNLEKNSIKQHNSCEVVFKNLLNIEKFLKDNIKTKKICFFCIKKIKKNNNSLKLKFFNFSNNWSWPVKNKNTKYFYIDKLGNKRIEIIGFKGQPVFSTAAGEVVFVTNLFKKYGLLIIIKHDQNYLSIYAFNNSVLVKEKDRVYKNQQIATMGLSSDTNLARLYFEIRYLGESINPLSILPKINTNI</sequence>
<comment type="similarity">
    <text evidence="2">Belongs to the E.coli NlpD/Haemophilus LppB family.</text>
</comment>
<protein>
    <recommendedName>
        <fullName>Protein NlpD/LppB homolog</fullName>
    </recommendedName>
</protein>